<keyword id="KW-0004">4Fe-4S</keyword>
<keyword id="KW-0408">Iron</keyword>
<keyword id="KW-0411">Iron-sulfur</keyword>
<keyword id="KW-0414">Isoprene biosynthesis</keyword>
<keyword id="KW-0479">Metal-binding</keyword>
<keyword id="KW-0560">Oxidoreductase</keyword>
<keyword id="KW-1185">Reference proteome</keyword>
<gene>
    <name evidence="1" type="primary">ispH</name>
    <name type="ordered locus">NGO_0072</name>
</gene>
<evidence type="ECO:0000255" key="1">
    <source>
        <dbReference type="HAMAP-Rule" id="MF_00191"/>
    </source>
</evidence>
<dbReference type="EC" id="1.17.7.4" evidence="1"/>
<dbReference type="EMBL" id="AE004969">
    <property type="protein sequence ID" value="AAW88835.1"/>
    <property type="molecule type" value="Genomic_DNA"/>
</dbReference>
<dbReference type="RefSeq" id="WP_010356621.1">
    <property type="nucleotide sequence ID" value="NC_002946.2"/>
</dbReference>
<dbReference type="RefSeq" id="YP_207247.1">
    <property type="nucleotide sequence ID" value="NC_002946.2"/>
</dbReference>
<dbReference type="SMR" id="Q5FAF2"/>
<dbReference type="STRING" id="242231.NGO_0072"/>
<dbReference type="DNASU" id="3282290"/>
<dbReference type="KEGG" id="ngo:NGO_0072"/>
<dbReference type="PATRIC" id="fig|242231.10.peg.93"/>
<dbReference type="HOGENOM" id="CLU_027486_1_0_4"/>
<dbReference type="UniPathway" id="UPA00056">
    <property type="reaction ID" value="UER00097"/>
</dbReference>
<dbReference type="UniPathway" id="UPA00059">
    <property type="reaction ID" value="UER00105"/>
</dbReference>
<dbReference type="Proteomes" id="UP000000535">
    <property type="component" value="Chromosome"/>
</dbReference>
<dbReference type="GO" id="GO:0051539">
    <property type="term" value="F:4 iron, 4 sulfur cluster binding"/>
    <property type="evidence" value="ECO:0007669"/>
    <property type="project" value="UniProtKB-UniRule"/>
</dbReference>
<dbReference type="GO" id="GO:0051745">
    <property type="term" value="F:4-hydroxy-3-methylbut-2-enyl diphosphate reductase activity"/>
    <property type="evidence" value="ECO:0007669"/>
    <property type="project" value="UniProtKB-UniRule"/>
</dbReference>
<dbReference type="GO" id="GO:0046872">
    <property type="term" value="F:metal ion binding"/>
    <property type="evidence" value="ECO:0007669"/>
    <property type="project" value="UniProtKB-KW"/>
</dbReference>
<dbReference type="GO" id="GO:0050992">
    <property type="term" value="P:dimethylallyl diphosphate biosynthetic process"/>
    <property type="evidence" value="ECO:0007669"/>
    <property type="project" value="UniProtKB-UniRule"/>
</dbReference>
<dbReference type="GO" id="GO:0019288">
    <property type="term" value="P:isopentenyl diphosphate biosynthetic process, methylerythritol 4-phosphate pathway"/>
    <property type="evidence" value="ECO:0007669"/>
    <property type="project" value="UniProtKB-UniRule"/>
</dbReference>
<dbReference type="GO" id="GO:0016114">
    <property type="term" value="P:terpenoid biosynthetic process"/>
    <property type="evidence" value="ECO:0007669"/>
    <property type="project" value="UniProtKB-UniRule"/>
</dbReference>
<dbReference type="CDD" id="cd13944">
    <property type="entry name" value="lytB_ispH"/>
    <property type="match status" value="1"/>
</dbReference>
<dbReference type="Gene3D" id="3.40.50.11270">
    <property type="match status" value="1"/>
</dbReference>
<dbReference type="Gene3D" id="3.40.1010.20">
    <property type="entry name" value="4-hydroxy-3-methylbut-2-enyl diphosphate reductase, catalytic domain"/>
    <property type="match status" value="2"/>
</dbReference>
<dbReference type="HAMAP" id="MF_00191">
    <property type="entry name" value="IspH"/>
    <property type="match status" value="1"/>
</dbReference>
<dbReference type="InterPro" id="IPR003451">
    <property type="entry name" value="LytB/IspH"/>
</dbReference>
<dbReference type="NCBIfam" id="TIGR00216">
    <property type="entry name" value="ispH_lytB"/>
    <property type="match status" value="1"/>
</dbReference>
<dbReference type="NCBIfam" id="NF002188">
    <property type="entry name" value="PRK01045.1-2"/>
    <property type="match status" value="1"/>
</dbReference>
<dbReference type="NCBIfam" id="NF002189">
    <property type="entry name" value="PRK01045.1-3"/>
    <property type="match status" value="1"/>
</dbReference>
<dbReference type="NCBIfam" id="NF002190">
    <property type="entry name" value="PRK01045.1-4"/>
    <property type="match status" value="1"/>
</dbReference>
<dbReference type="PANTHER" id="PTHR30426">
    <property type="entry name" value="4-HYDROXY-3-METHYLBUT-2-ENYL DIPHOSPHATE REDUCTASE"/>
    <property type="match status" value="1"/>
</dbReference>
<dbReference type="PANTHER" id="PTHR30426:SF0">
    <property type="entry name" value="4-HYDROXY-3-METHYLBUT-2-ENYL DIPHOSPHATE REDUCTASE"/>
    <property type="match status" value="1"/>
</dbReference>
<dbReference type="Pfam" id="PF02401">
    <property type="entry name" value="LYTB"/>
    <property type="match status" value="1"/>
</dbReference>
<sequence length="322" mass="35141">MNGKTIILANPRGFCAGVDRAISIVERALEEFGAPVYVRHEVVHNKFVVDNLREKGAVFIEDLAEVPPGATLVYSAHGVSKAVQQEAAERGFRVFDATCPLVTKVHKEVARLDAQDCEIIMIGHKGHAEVEGTMGQLAPGKMLLVETVGDVAKLEVRNPDKLAYVSQTTLSVDETKDIIAALNARFPNIRNPHKEDICYATTNRQTAVKELAEQCDIVIVVGSPNSSNSNRLREVAASRGIDAYMVDNASYLQRTWFEGKSKVGVTAGASAPEVLVREVLATIRGWGHETVREGGGAEESIVFVLPKELRREGETKPDLCKR</sequence>
<organism>
    <name type="scientific">Neisseria gonorrhoeae (strain ATCC 700825 / FA 1090)</name>
    <dbReference type="NCBI Taxonomy" id="242231"/>
    <lineage>
        <taxon>Bacteria</taxon>
        <taxon>Pseudomonadati</taxon>
        <taxon>Pseudomonadota</taxon>
        <taxon>Betaproteobacteria</taxon>
        <taxon>Neisseriales</taxon>
        <taxon>Neisseriaceae</taxon>
        <taxon>Neisseria</taxon>
    </lineage>
</organism>
<protein>
    <recommendedName>
        <fullName evidence="1">4-hydroxy-3-methylbut-2-enyl diphosphate reductase</fullName>
        <shortName evidence="1">HMBPP reductase</shortName>
        <ecNumber evidence="1">1.17.7.4</ecNumber>
    </recommendedName>
</protein>
<comment type="function">
    <text evidence="1">Catalyzes the conversion of 1-hydroxy-2-methyl-2-(E)-butenyl 4-diphosphate (HMBPP) into a mixture of isopentenyl diphosphate (IPP) and dimethylallyl diphosphate (DMAPP). Acts in the terminal step of the DOXP/MEP pathway for isoprenoid precursor biosynthesis.</text>
</comment>
<comment type="catalytic activity">
    <reaction evidence="1">
        <text>isopentenyl diphosphate + 2 oxidized [2Fe-2S]-[ferredoxin] + H2O = (2E)-4-hydroxy-3-methylbut-2-enyl diphosphate + 2 reduced [2Fe-2S]-[ferredoxin] + 2 H(+)</text>
        <dbReference type="Rhea" id="RHEA:24488"/>
        <dbReference type="Rhea" id="RHEA-COMP:10000"/>
        <dbReference type="Rhea" id="RHEA-COMP:10001"/>
        <dbReference type="ChEBI" id="CHEBI:15377"/>
        <dbReference type="ChEBI" id="CHEBI:15378"/>
        <dbReference type="ChEBI" id="CHEBI:33737"/>
        <dbReference type="ChEBI" id="CHEBI:33738"/>
        <dbReference type="ChEBI" id="CHEBI:128753"/>
        <dbReference type="ChEBI" id="CHEBI:128769"/>
        <dbReference type="EC" id="1.17.7.4"/>
    </reaction>
</comment>
<comment type="catalytic activity">
    <reaction evidence="1">
        <text>dimethylallyl diphosphate + 2 oxidized [2Fe-2S]-[ferredoxin] + H2O = (2E)-4-hydroxy-3-methylbut-2-enyl diphosphate + 2 reduced [2Fe-2S]-[ferredoxin] + 2 H(+)</text>
        <dbReference type="Rhea" id="RHEA:24825"/>
        <dbReference type="Rhea" id="RHEA-COMP:10000"/>
        <dbReference type="Rhea" id="RHEA-COMP:10001"/>
        <dbReference type="ChEBI" id="CHEBI:15377"/>
        <dbReference type="ChEBI" id="CHEBI:15378"/>
        <dbReference type="ChEBI" id="CHEBI:33737"/>
        <dbReference type="ChEBI" id="CHEBI:33738"/>
        <dbReference type="ChEBI" id="CHEBI:57623"/>
        <dbReference type="ChEBI" id="CHEBI:128753"/>
        <dbReference type="EC" id="1.17.7.4"/>
    </reaction>
</comment>
<comment type="cofactor">
    <cofactor evidence="1">
        <name>[4Fe-4S] cluster</name>
        <dbReference type="ChEBI" id="CHEBI:49883"/>
    </cofactor>
    <text evidence="1">Binds 1 [4Fe-4S] cluster per subunit.</text>
</comment>
<comment type="pathway">
    <text evidence="1">Isoprenoid biosynthesis; dimethylallyl diphosphate biosynthesis; dimethylallyl diphosphate from (2E)-4-hydroxy-3-methylbutenyl diphosphate: step 1/1.</text>
</comment>
<comment type="pathway">
    <text evidence="1">Isoprenoid biosynthesis; isopentenyl diphosphate biosynthesis via DXP pathway; isopentenyl diphosphate from 1-deoxy-D-xylulose 5-phosphate: step 6/6.</text>
</comment>
<comment type="similarity">
    <text evidence="1">Belongs to the IspH family.</text>
</comment>
<feature type="chain" id="PRO_0000128843" description="4-hydroxy-3-methylbut-2-enyl diphosphate reductase">
    <location>
        <begin position="1"/>
        <end position="322"/>
    </location>
</feature>
<feature type="active site" description="Proton donor" evidence="1">
    <location>
        <position position="129"/>
    </location>
</feature>
<feature type="binding site" evidence="1">
    <location>
        <position position="15"/>
    </location>
    <ligand>
        <name>[4Fe-4S] cluster</name>
        <dbReference type="ChEBI" id="CHEBI:49883"/>
    </ligand>
</feature>
<feature type="binding site" evidence="1">
    <location>
        <position position="44"/>
    </location>
    <ligand>
        <name>(2E)-4-hydroxy-3-methylbut-2-enyl diphosphate</name>
        <dbReference type="ChEBI" id="CHEBI:128753"/>
    </ligand>
</feature>
<feature type="binding site" evidence="1">
    <location>
        <position position="44"/>
    </location>
    <ligand>
        <name>dimethylallyl diphosphate</name>
        <dbReference type="ChEBI" id="CHEBI:57623"/>
    </ligand>
</feature>
<feature type="binding site" evidence="1">
    <location>
        <position position="44"/>
    </location>
    <ligand>
        <name>isopentenyl diphosphate</name>
        <dbReference type="ChEBI" id="CHEBI:128769"/>
    </ligand>
</feature>
<feature type="binding site" evidence="1">
    <location>
        <position position="77"/>
    </location>
    <ligand>
        <name>(2E)-4-hydroxy-3-methylbut-2-enyl diphosphate</name>
        <dbReference type="ChEBI" id="CHEBI:128753"/>
    </ligand>
</feature>
<feature type="binding site" evidence="1">
    <location>
        <position position="77"/>
    </location>
    <ligand>
        <name>dimethylallyl diphosphate</name>
        <dbReference type="ChEBI" id="CHEBI:57623"/>
    </ligand>
</feature>
<feature type="binding site" evidence="1">
    <location>
        <position position="77"/>
    </location>
    <ligand>
        <name>isopentenyl diphosphate</name>
        <dbReference type="ChEBI" id="CHEBI:128769"/>
    </ligand>
</feature>
<feature type="binding site" evidence="1">
    <location>
        <position position="99"/>
    </location>
    <ligand>
        <name>[4Fe-4S] cluster</name>
        <dbReference type="ChEBI" id="CHEBI:49883"/>
    </ligand>
</feature>
<feature type="binding site" evidence="1">
    <location>
        <position position="127"/>
    </location>
    <ligand>
        <name>(2E)-4-hydroxy-3-methylbut-2-enyl diphosphate</name>
        <dbReference type="ChEBI" id="CHEBI:128753"/>
    </ligand>
</feature>
<feature type="binding site" evidence="1">
    <location>
        <position position="127"/>
    </location>
    <ligand>
        <name>dimethylallyl diphosphate</name>
        <dbReference type="ChEBI" id="CHEBI:57623"/>
    </ligand>
</feature>
<feature type="binding site" evidence="1">
    <location>
        <position position="127"/>
    </location>
    <ligand>
        <name>isopentenyl diphosphate</name>
        <dbReference type="ChEBI" id="CHEBI:128769"/>
    </ligand>
</feature>
<feature type="binding site" evidence="1">
    <location>
        <position position="168"/>
    </location>
    <ligand>
        <name>(2E)-4-hydroxy-3-methylbut-2-enyl diphosphate</name>
        <dbReference type="ChEBI" id="CHEBI:128753"/>
    </ligand>
</feature>
<feature type="binding site" evidence="1">
    <location>
        <position position="198"/>
    </location>
    <ligand>
        <name>[4Fe-4S] cluster</name>
        <dbReference type="ChEBI" id="CHEBI:49883"/>
    </ligand>
</feature>
<feature type="binding site" evidence="1">
    <location>
        <position position="226"/>
    </location>
    <ligand>
        <name>(2E)-4-hydroxy-3-methylbut-2-enyl diphosphate</name>
        <dbReference type="ChEBI" id="CHEBI:128753"/>
    </ligand>
</feature>
<feature type="binding site" evidence="1">
    <location>
        <position position="226"/>
    </location>
    <ligand>
        <name>dimethylallyl diphosphate</name>
        <dbReference type="ChEBI" id="CHEBI:57623"/>
    </ligand>
</feature>
<feature type="binding site" evidence="1">
    <location>
        <position position="226"/>
    </location>
    <ligand>
        <name>isopentenyl diphosphate</name>
        <dbReference type="ChEBI" id="CHEBI:128769"/>
    </ligand>
</feature>
<feature type="binding site" evidence="1">
    <location>
        <position position="227"/>
    </location>
    <ligand>
        <name>(2E)-4-hydroxy-3-methylbut-2-enyl diphosphate</name>
        <dbReference type="ChEBI" id="CHEBI:128753"/>
    </ligand>
</feature>
<feature type="binding site" evidence="1">
    <location>
        <position position="227"/>
    </location>
    <ligand>
        <name>dimethylallyl diphosphate</name>
        <dbReference type="ChEBI" id="CHEBI:57623"/>
    </ligand>
</feature>
<feature type="binding site" evidence="1">
    <location>
        <position position="227"/>
    </location>
    <ligand>
        <name>isopentenyl diphosphate</name>
        <dbReference type="ChEBI" id="CHEBI:128769"/>
    </ligand>
</feature>
<feature type="binding site" evidence="1">
    <location>
        <position position="228"/>
    </location>
    <ligand>
        <name>(2E)-4-hydroxy-3-methylbut-2-enyl diphosphate</name>
        <dbReference type="ChEBI" id="CHEBI:128753"/>
    </ligand>
</feature>
<feature type="binding site" evidence="1">
    <location>
        <position position="228"/>
    </location>
    <ligand>
        <name>dimethylallyl diphosphate</name>
        <dbReference type="ChEBI" id="CHEBI:57623"/>
    </ligand>
</feature>
<feature type="binding site" evidence="1">
    <location>
        <position position="228"/>
    </location>
    <ligand>
        <name>isopentenyl diphosphate</name>
        <dbReference type="ChEBI" id="CHEBI:128769"/>
    </ligand>
</feature>
<feature type="binding site" evidence="1">
    <location>
        <position position="270"/>
    </location>
    <ligand>
        <name>(2E)-4-hydroxy-3-methylbut-2-enyl diphosphate</name>
        <dbReference type="ChEBI" id="CHEBI:128753"/>
    </ligand>
</feature>
<feature type="binding site" evidence="1">
    <location>
        <position position="270"/>
    </location>
    <ligand>
        <name>dimethylallyl diphosphate</name>
        <dbReference type="ChEBI" id="CHEBI:57623"/>
    </ligand>
</feature>
<feature type="binding site" evidence="1">
    <location>
        <position position="270"/>
    </location>
    <ligand>
        <name>isopentenyl diphosphate</name>
        <dbReference type="ChEBI" id="CHEBI:128769"/>
    </ligand>
</feature>
<proteinExistence type="inferred from homology"/>
<name>ISPH_NEIG1</name>
<reference key="1">
    <citation type="submission" date="2003-03" db="EMBL/GenBank/DDBJ databases">
        <title>The complete genome sequence of Neisseria gonorrhoeae.</title>
        <authorList>
            <person name="Lewis L.A."/>
            <person name="Gillaspy A.F."/>
            <person name="McLaughlin R.E."/>
            <person name="Gipson M."/>
            <person name="Ducey T.F."/>
            <person name="Ownbey T."/>
            <person name="Hartman K."/>
            <person name="Nydick C."/>
            <person name="Carson M.B."/>
            <person name="Vaughn J."/>
            <person name="Thomson C."/>
            <person name="Song L."/>
            <person name="Lin S."/>
            <person name="Yuan X."/>
            <person name="Najar F."/>
            <person name="Zhan M."/>
            <person name="Ren Q."/>
            <person name="Zhu H."/>
            <person name="Qi S."/>
            <person name="Kenton S.M."/>
            <person name="Lai H."/>
            <person name="White J.D."/>
            <person name="Clifton S."/>
            <person name="Roe B.A."/>
            <person name="Dyer D.W."/>
        </authorList>
    </citation>
    <scope>NUCLEOTIDE SEQUENCE [LARGE SCALE GENOMIC DNA]</scope>
    <source>
        <strain>ATCC 700825 / FA 1090</strain>
    </source>
</reference>
<accession>Q5FAF2</accession>